<accession>C6DB33</accession>
<sequence length="158" mass="16481">MNVIEGVVATPDARVAIAIARFNHFINDSLLEGAIDALKRIGQVKDENITVVWVPGAYELPLTVRALTKSAKNGGYDAVIALGTVIRGGTAHFEFVAGECSSGLSSVAMDSEIPVAFGVLTTESIEQAIERAGTKAGNKGAEAALTALEMINVLKAIK</sequence>
<protein>
    <recommendedName>
        <fullName evidence="1">6,7-dimethyl-8-ribityllumazine synthase</fullName>
        <shortName evidence="1">DMRL synthase</shortName>
        <shortName evidence="1">LS</shortName>
        <shortName evidence="1">Lumazine synthase</shortName>
        <ecNumber evidence="1">2.5.1.78</ecNumber>
    </recommendedName>
</protein>
<name>RISB_PECCP</name>
<feature type="chain" id="PRO_1000203798" description="6,7-dimethyl-8-ribityllumazine synthase">
    <location>
        <begin position="1"/>
        <end position="158"/>
    </location>
</feature>
<feature type="active site" description="Proton donor" evidence="1">
    <location>
        <position position="92"/>
    </location>
</feature>
<feature type="binding site" evidence="1">
    <location>
        <position position="22"/>
    </location>
    <ligand>
        <name>5-amino-6-(D-ribitylamino)uracil</name>
        <dbReference type="ChEBI" id="CHEBI:15934"/>
    </ligand>
</feature>
<feature type="binding site" evidence="1">
    <location>
        <begin position="57"/>
        <end position="59"/>
    </location>
    <ligand>
        <name>5-amino-6-(D-ribitylamino)uracil</name>
        <dbReference type="ChEBI" id="CHEBI:15934"/>
    </ligand>
</feature>
<feature type="binding site" evidence="1">
    <location>
        <begin position="84"/>
        <end position="86"/>
    </location>
    <ligand>
        <name>5-amino-6-(D-ribitylamino)uracil</name>
        <dbReference type="ChEBI" id="CHEBI:15934"/>
    </ligand>
</feature>
<feature type="binding site" evidence="1">
    <location>
        <begin position="89"/>
        <end position="90"/>
    </location>
    <ligand>
        <name>(2S)-2-hydroxy-3-oxobutyl phosphate</name>
        <dbReference type="ChEBI" id="CHEBI:58830"/>
    </ligand>
</feature>
<feature type="binding site" evidence="1">
    <location>
        <position position="117"/>
    </location>
    <ligand>
        <name>5-amino-6-(D-ribitylamino)uracil</name>
        <dbReference type="ChEBI" id="CHEBI:15934"/>
    </ligand>
</feature>
<feature type="binding site" evidence="1">
    <location>
        <position position="131"/>
    </location>
    <ligand>
        <name>(2S)-2-hydroxy-3-oxobutyl phosphate</name>
        <dbReference type="ChEBI" id="CHEBI:58830"/>
    </ligand>
</feature>
<proteinExistence type="inferred from homology"/>
<reference key="1">
    <citation type="submission" date="2009-07" db="EMBL/GenBank/DDBJ databases">
        <title>Complete sequence of Pectobacterium carotovorum subsp. carotovorum PC1.</title>
        <authorList>
            <consortium name="US DOE Joint Genome Institute"/>
            <person name="Lucas S."/>
            <person name="Copeland A."/>
            <person name="Lapidus A."/>
            <person name="Glavina del Rio T."/>
            <person name="Tice H."/>
            <person name="Bruce D."/>
            <person name="Goodwin L."/>
            <person name="Pitluck S."/>
            <person name="Munk A.C."/>
            <person name="Brettin T."/>
            <person name="Detter J.C."/>
            <person name="Han C."/>
            <person name="Tapia R."/>
            <person name="Larimer F."/>
            <person name="Land M."/>
            <person name="Hauser L."/>
            <person name="Kyrpides N."/>
            <person name="Mikhailova N."/>
            <person name="Balakrishnan V."/>
            <person name="Glasner J."/>
            <person name="Perna N.T."/>
        </authorList>
    </citation>
    <scope>NUCLEOTIDE SEQUENCE [LARGE SCALE GENOMIC DNA]</scope>
    <source>
        <strain>PC1</strain>
    </source>
</reference>
<evidence type="ECO:0000255" key="1">
    <source>
        <dbReference type="HAMAP-Rule" id="MF_00178"/>
    </source>
</evidence>
<keyword id="KW-0686">Riboflavin biosynthesis</keyword>
<keyword id="KW-0808">Transferase</keyword>
<organism>
    <name type="scientific">Pectobacterium carotovorum subsp. carotovorum (strain PC1)</name>
    <dbReference type="NCBI Taxonomy" id="561230"/>
    <lineage>
        <taxon>Bacteria</taxon>
        <taxon>Pseudomonadati</taxon>
        <taxon>Pseudomonadota</taxon>
        <taxon>Gammaproteobacteria</taxon>
        <taxon>Enterobacterales</taxon>
        <taxon>Pectobacteriaceae</taxon>
        <taxon>Pectobacterium</taxon>
    </lineage>
</organism>
<gene>
    <name evidence="1" type="primary">ribH</name>
    <name type="ordered locus">PC1_1026</name>
</gene>
<dbReference type="EC" id="2.5.1.78" evidence="1"/>
<dbReference type="EMBL" id="CP001657">
    <property type="protein sequence ID" value="ACT12075.1"/>
    <property type="molecule type" value="Genomic_DNA"/>
</dbReference>
<dbReference type="SMR" id="C6DB33"/>
<dbReference type="STRING" id="561230.PC1_1026"/>
<dbReference type="KEGG" id="pct:PC1_1026"/>
<dbReference type="eggNOG" id="COG0054">
    <property type="taxonomic scope" value="Bacteria"/>
</dbReference>
<dbReference type="HOGENOM" id="CLU_089358_1_1_6"/>
<dbReference type="OrthoDB" id="9809709at2"/>
<dbReference type="UniPathway" id="UPA00275">
    <property type="reaction ID" value="UER00404"/>
</dbReference>
<dbReference type="Proteomes" id="UP000002736">
    <property type="component" value="Chromosome"/>
</dbReference>
<dbReference type="GO" id="GO:0005829">
    <property type="term" value="C:cytosol"/>
    <property type="evidence" value="ECO:0007669"/>
    <property type="project" value="TreeGrafter"/>
</dbReference>
<dbReference type="GO" id="GO:0009349">
    <property type="term" value="C:riboflavin synthase complex"/>
    <property type="evidence" value="ECO:0007669"/>
    <property type="project" value="InterPro"/>
</dbReference>
<dbReference type="GO" id="GO:0000906">
    <property type="term" value="F:6,7-dimethyl-8-ribityllumazine synthase activity"/>
    <property type="evidence" value="ECO:0007669"/>
    <property type="project" value="UniProtKB-UniRule"/>
</dbReference>
<dbReference type="GO" id="GO:0009231">
    <property type="term" value="P:riboflavin biosynthetic process"/>
    <property type="evidence" value="ECO:0007669"/>
    <property type="project" value="UniProtKB-UniRule"/>
</dbReference>
<dbReference type="CDD" id="cd09209">
    <property type="entry name" value="Lumazine_synthase-I"/>
    <property type="match status" value="1"/>
</dbReference>
<dbReference type="FunFam" id="3.40.50.960:FF:000001">
    <property type="entry name" value="6,7-dimethyl-8-ribityllumazine synthase"/>
    <property type="match status" value="1"/>
</dbReference>
<dbReference type="Gene3D" id="3.40.50.960">
    <property type="entry name" value="Lumazine/riboflavin synthase"/>
    <property type="match status" value="1"/>
</dbReference>
<dbReference type="HAMAP" id="MF_00178">
    <property type="entry name" value="Lumazine_synth"/>
    <property type="match status" value="1"/>
</dbReference>
<dbReference type="InterPro" id="IPR034964">
    <property type="entry name" value="LS"/>
</dbReference>
<dbReference type="InterPro" id="IPR002180">
    <property type="entry name" value="LS/RS"/>
</dbReference>
<dbReference type="InterPro" id="IPR036467">
    <property type="entry name" value="LS/RS_sf"/>
</dbReference>
<dbReference type="NCBIfam" id="TIGR00114">
    <property type="entry name" value="lumazine-synth"/>
    <property type="match status" value="1"/>
</dbReference>
<dbReference type="NCBIfam" id="NF000812">
    <property type="entry name" value="PRK00061.1-4"/>
    <property type="match status" value="1"/>
</dbReference>
<dbReference type="PANTHER" id="PTHR21058:SF0">
    <property type="entry name" value="6,7-DIMETHYL-8-RIBITYLLUMAZINE SYNTHASE"/>
    <property type="match status" value="1"/>
</dbReference>
<dbReference type="PANTHER" id="PTHR21058">
    <property type="entry name" value="6,7-DIMETHYL-8-RIBITYLLUMAZINE SYNTHASE DMRL SYNTHASE LUMAZINE SYNTHASE"/>
    <property type="match status" value="1"/>
</dbReference>
<dbReference type="Pfam" id="PF00885">
    <property type="entry name" value="DMRL_synthase"/>
    <property type="match status" value="1"/>
</dbReference>
<dbReference type="SUPFAM" id="SSF52121">
    <property type="entry name" value="Lumazine synthase"/>
    <property type="match status" value="1"/>
</dbReference>
<comment type="function">
    <text evidence="1">Catalyzes the formation of 6,7-dimethyl-8-ribityllumazine by condensation of 5-amino-6-(D-ribitylamino)uracil with 3,4-dihydroxy-2-butanone 4-phosphate. This is the penultimate step in the biosynthesis of riboflavin.</text>
</comment>
<comment type="catalytic activity">
    <reaction evidence="1">
        <text>(2S)-2-hydroxy-3-oxobutyl phosphate + 5-amino-6-(D-ribitylamino)uracil = 6,7-dimethyl-8-(1-D-ribityl)lumazine + phosphate + 2 H2O + H(+)</text>
        <dbReference type="Rhea" id="RHEA:26152"/>
        <dbReference type="ChEBI" id="CHEBI:15377"/>
        <dbReference type="ChEBI" id="CHEBI:15378"/>
        <dbReference type="ChEBI" id="CHEBI:15934"/>
        <dbReference type="ChEBI" id="CHEBI:43474"/>
        <dbReference type="ChEBI" id="CHEBI:58201"/>
        <dbReference type="ChEBI" id="CHEBI:58830"/>
        <dbReference type="EC" id="2.5.1.78"/>
    </reaction>
</comment>
<comment type="pathway">
    <text evidence="1">Cofactor biosynthesis; riboflavin biosynthesis; riboflavin from 2-hydroxy-3-oxobutyl phosphate and 5-amino-6-(D-ribitylamino)uracil: step 1/2.</text>
</comment>
<comment type="subunit">
    <text evidence="1">Forms an icosahedral capsid composed of 60 subunits, arranged as a dodecamer of pentamers.</text>
</comment>
<comment type="similarity">
    <text evidence="1">Belongs to the DMRL synthase family.</text>
</comment>